<reference key="1">
    <citation type="journal article" date="1994" name="Biochem. Biophys. Res. Commun.">
        <title>Molecular cloning and sequencing of porcine somatostatin receptor 2.</title>
        <authorList>
            <person name="Matsumoto K."/>
            <person name="Yokogoshi Y."/>
            <person name="Fujinaka Y."/>
            <person name="Zhang C."/>
            <person name="Saito S."/>
        </authorList>
    </citation>
    <scope>NUCLEOTIDE SEQUENCE [GENOMIC DNA]</scope>
</reference>
<dbReference type="EMBL" id="D21338">
    <property type="protein sequence ID" value="BAA04810.1"/>
    <property type="molecule type" value="Genomic_DNA"/>
</dbReference>
<dbReference type="PIR" id="JC2083">
    <property type="entry name" value="JC2083"/>
</dbReference>
<dbReference type="RefSeq" id="NP_001011694.1">
    <property type="nucleotide sequence ID" value="NM_001011694.1"/>
</dbReference>
<dbReference type="RefSeq" id="XP_005668700.1">
    <property type="nucleotide sequence ID" value="XM_005668643.3"/>
</dbReference>
<dbReference type="SMR" id="P34994"/>
<dbReference type="FunCoup" id="P34994">
    <property type="interactions" value="334"/>
</dbReference>
<dbReference type="STRING" id="9823.ENSSSCP00000018276"/>
<dbReference type="GlyCosmos" id="P34994">
    <property type="glycosylation" value="4 sites, No reported glycans"/>
</dbReference>
<dbReference type="GlyGen" id="P34994">
    <property type="glycosylation" value="5 sites"/>
</dbReference>
<dbReference type="PaxDb" id="9823-ENSSSCP00000018276"/>
<dbReference type="Ensembl" id="ENSSSCT00000018778.3">
    <property type="protein sequence ID" value="ENSSSCP00000018276.3"/>
    <property type="gene ID" value="ENSSSCG00000017249.3"/>
</dbReference>
<dbReference type="Ensembl" id="ENSSSCT00025085298.1">
    <property type="protein sequence ID" value="ENSSSCP00025037065.1"/>
    <property type="gene ID" value="ENSSSCG00025062337.1"/>
</dbReference>
<dbReference type="Ensembl" id="ENSSSCT00030066575.1">
    <property type="protein sequence ID" value="ENSSSCP00030030500.1"/>
    <property type="gene ID" value="ENSSSCG00030047665.1"/>
</dbReference>
<dbReference type="Ensembl" id="ENSSSCT00035015822.1">
    <property type="protein sequence ID" value="ENSSSCP00035005454.1"/>
    <property type="gene ID" value="ENSSSCG00035012536.1"/>
</dbReference>
<dbReference type="Ensembl" id="ENSSSCT00045034596.1">
    <property type="protein sequence ID" value="ENSSSCP00045023995.1"/>
    <property type="gene ID" value="ENSSSCG00045020309.1"/>
</dbReference>
<dbReference type="Ensembl" id="ENSSSCT00050080125.1">
    <property type="protein sequence ID" value="ENSSSCP00050034416.1"/>
    <property type="gene ID" value="ENSSSCG00050058799.1"/>
</dbReference>
<dbReference type="Ensembl" id="ENSSSCT00055024462.1">
    <property type="protein sequence ID" value="ENSSSCP00055019414.1"/>
    <property type="gene ID" value="ENSSSCG00055012428.1"/>
</dbReference>
<dbReference type="Ensembl" id="ENSSSCT00060103734.1">
    <property type="protein sequence ID" value="ENSSSCP00060045365.1"/>
    <property type="gene ID" value="ENSSSCG00060075713.1"/>
</dbReference>
<dbReference type="Ensembl" id="ENSSSCT00070003927.1">
    <property type="protein sequence ID" value="ENSSSCP00070003253.1"/>
    <property type="gene ID" value="ENSSSCG00070002100.1"/>
</dbReference>
<dbReference type="Ensembl" id="ENSSSCT00085013997">
    <property type="protein sequence ID" value="ENSSSCP00085010148"/>
    <property type="gene ID" value="ENSSSCG00085007347"/>
</dbReference>
<dbReference type="Ensembl" id="ENSSSCT00085014004">
    <property type="protein sequence ID" value="ENSSSCP00085010152"/>
    <property type="gene ID" value="ENSSSCG00085007347"/>
</dbReference>
<dbReference type="Ensembl" id="ENSSSCT00090010649">
    <property type="protein sequence ID" value="ENSSSCP00090006554"/>
    <property type="gene ID" value="ENSSSCG00090006062"/>
</dbReference>
<dbReference type="Ensembl" id="ENSSSCT00090010653">
    <property type="protein sequence ID" value="ENSSSCP00090006558"/>
    <property type="gene ID" value="ENSSSCG00090006062"/>
</dbReference>
<dbReference type="Ensembl" id="ENSSSCT00110059439">
    <property type="protein sequence ID" value="ENSSSCP00110041407"/>
    <property type="gene ID" value="ENSSSCG00110031141"/>
</dbReference>
<dbReference type="Ensembl" id="ENSSSCT00110059444">
    <property type="protein sequence ID" value="ENSSSCP00110041412"/>
    <property type="gene ID" value="ENSSSCG00110031141"/>
</dbReference>
<dbReference type="Ensembl" id="ENSSSCT00115036780">
    <property type="protein sequence ID" value="ENSSSCP00115034810"/>
    <property type="gene ID" value="ENSSSCG00115020751"/>
</dbReference>
<dbReference type="GeneID" id="497059"/>
<dbReference type="KEGG" id="ssc:497059"/>
<dbReference type="CTD" id="6752"/>
<dbReference type="VGNC" id="VGNC:99086">
    <property type="gene designation" value="SSTR2"/>
</dbReference>
<dbReference type="eggNOG" id="KOG3656">
    <property type="taxonomic scope" value="Eukaryota"/>
</dbReference>
<dbReference type="GeneTree" id="ENSGT00940000156544"/>
<dbReference type="HOGENOM" id="CLU_009579_8_1_1"/>
<dbReference type="InParanoid" id="P34994"/>
<dbReference type="OrthoDB" id="6076970at2759"/>
<dbReference type="TreeFam" id="TF315737"/>
<dbReference type="Reactome" id="R-SSC-375276">
    <property type="pathway name" value="Peptide ligand-binding receptors"/>
</dbReference>
<dbReference type="Reactome" id="R-SSC-418594">
    <property type="pathway name" value="G alpha (i) signalling events"/>
</dbReference>
<dbReference type="Proteomes" id="UP000008227">
    <property type="component" value="Chromosome 12"/>
</dbReference>
<dbReference type="Proteomes" id="UP000314985">
    <property type="component" value="Chromosome 12"/>
</dbReference>
<dbReference type="Proteomes" id="UP000694570">
    <property type="component" value="Unplaced"/>
</dbReference>
<dbReference type="Proteomes" id="UP000694571">
    <property type="component" value="Unplaced"/>
</dbReference>
<dbReference type="Proteomes" id="UP000694720">
    <property type="component" value="Unplaced"/>
</dbReference>
<dbReference type="Proteomes" id="UP000694722">
    <property type="component" value="Unplaced"/>
</dbReference>
<dbReference type="Proteomes" id="UP000694723">
    <property type="component" value="Unplaced"/>
</dbReference>
<dbReference type="Proteomes" id="UP000694724">
    <property type="component" value="Unplaced"/>
</dbReference>
<dbReference type="Proteomes" id="UP000694725">
    <property type="component" value="Unplaced"/>
</dbReference>
<dbReference type="Proteomes" id="UP000694726">
    <property type="component" value="Unplaced"/>
</dbReference>
<dbReference type="Proteomes" id="UP000694727">
    <property type="component" value="Unplaced"/>
</dbReference>
<dbReference type="Proteomes" id="UP000694728">
    <property type="component" value="Unplaced"/>
</dbReference>
<dbReference type="GO" id="GO:0005829">
    <property type="term" value="C:cytosol"/>
    <property type="evidence" value="ECO:0007669"/>
    <property type="project" value="Ensembl"/>
</dbReference>
<dbReference type="GO" id="GO:0038039">
    <property type="term" value="C:G protein-coupled receptor heterodimeric complex"/>
    <property type="evidence" value="ECO:0000314"/>
    <property type="project" value="AgBase"/>
</dbReference>
<dbReference type="GO" id="GO:0005654">
    <property type="term" value="C:nucleoplasm"/>
    <property type="evidence" value="ECO:0007669"/>
    <property type="project" value="Ensembl"/>
</dbReference>
<dbReference type="GO" id="GO:0005886">
    <property type="term" value="C:plasma membrane"/>
    <property type="evidence" value="ECO:0000314"/>
    <property type="project" value="AgBase"/>
</dbReference>
<dbReference type="GO" id="GO:0030165">
    <property type="term" value="F:PDZ domain binding"/>
    <property type="evidence" value="ECO:0007669"/>
    <property type="project" value="Ensembl"/>
</dbReference>
<dbReference type="GO" id="GO:0046982">
    <property type="term" value="F:protein heterodimerization activity"/>
    <property type="evidence" value="ECO:0000314"/>
    <property type="project" value="AgBase"/>
</dbReference>
<dbReference type="GO" id="GO:0004994">
    <property type="term" value="F:somatostatin receptor activity"/>
    <property type="evidence" value="ECO:0007669"/>
    <property type="project" value="Ensembl"/>
</dbReference>
<dbReference type="GO" id="GO:0007193">
    <property type="term" value="P:adenylate cyclase-inhibiting G protein-coupled receptor signaling pathway"/>
    <property type="evidence" value="ECO:0007669"/>
    <property type="project" value="Ensembl"/>
</dbReference>
<dbReference type="GO" id="GO:0060125">
    <property type="term" value="P:negative regulation of growth hormone secretion"/>
    <property type="evidence" value="ECO:0000315"/>
    <property type="project" value="AgBase"/>
</dbReference>
<dbReference type="CDD" id="cd15971">
    <property type="entry name" value="7tmA_SSTR2"/>
    <property type="match status" value="1"/>
</dbReference>
<dbReference type="FunFam" id="1.20.1070.10:FF:000039">
    <property type="entry name" value="somatostatin receptor type 2"/>
    <property type="match status" value="1"/>
</dbReference>
<dbReference type="Gene3D" id="1.20.1070.10">
    <property type="entry name" value="Rhodopsin 7-helix transmembrane proteins"/>
    <property type="match status" value="1"/>
</dbReference>
<dbReference type="InterPro" id="IPR000276">
    <property type="entry name" value="GPCR_Rhodpsn"/>
</dbReference>
<dbReference type="InterPro" id="IPR017452">
    <property type="entry name" value="GPCR_Rhodpsn_7TM"/>
</dbReference>
<dbReference type="InterPro" id="IPR000586">
    <property type="entry name" value="Somatstn_rcpt"/>
</dbReference>
<dbReference type="InterPro" id="IPR002074">
    <property type="entry name" value="Somatstn_rcpt_2"/>
</dbReference>
<dbReference type="PANTHER" id="PTHR24229">
    <property type="entry name" value="NEUROPEPTIDES RECEPTOR"/>
    <property type="match status" value="1"/>
</dbReference>
<dbReference type="PANTHER" id="PTHR24229:SF6">
    <property type="entry name" value="SOMATOSTATIN RECEPTOR TYPE 2"/>
    <property type="match status" value="1"/>
</dbReference>
<dbReference type="Pfam" id="PF00001">
    <property type="entry name" value="7tm_1"/>
    <property type="match status" value="1"/>
</dbReference>
<dbReference type="PRINTS" id="PR00237">
    <property type="entry name" value="GPCRRHODOPSN"/>
</dbReference>
<dbReference type="PRINTS" id="PR00246">
    <property type="entry name" value="SOMATOSTATNR"/>
</dbReference>
<dbReference type="PRINTS" id="PR00588">
    <property type="entry name" value="SOMATOSTTN2R"/>
</dbReference>
<dbReference type="SMART" id="SM01381">
    <property type="entry name" value="7TM_GPCR_Srsx"/>
    <property type="match status" value="1"/>
</dbReference>
<dbReference type="SUPFAM" id="SSF81321">
    <property type="entry name" value="Family A G protein-coupled receptor-like"/>
    <property type="match status" value="1"/>
</dbReference>
<dbReference type="PROSITE" id="PS00237">
    <property type="entry name" value="G_PROTEIN_RECEP_F1_1"/>
    <property type="match status" value="1"/>
</dbReference>
<dbReference type="PROSITE" id="PS50262">
    <property type="entry name" value="G_PROTEIN_RECEP_F1_2"/>
    <property type="match status" value="1"/>
</dbReference>
<gene>
    <name type="primary">SSTR2</name>
</gene>
<proteinExistence type="inferred from homology"/>
<protein>
    <recommendedName>
        <fullName>Somatostatin receptor type 2</fullName>
        <shortName>SS-2-R</shortName>
        <shortName>SS2-R</shortName>
        <shortName>SS2R</shortName>
    </recommendedName>
    <alternativeName>
        <fullName>SRIF-1</fullName>
    </alternativeName>
</protein>
<comment type="function">
    <text evidence="1">Receptor for somatostatin-14 and -28. This receptor is coupled via pertussis toxin sensitive G proteins to inhibition of adenylyl cyclase. In addition it stimulates phosphotyrosine phosphatase and PLC via pertussis toxin insensitive as well as sensitive G proteins. Inhibits calcium entry by suppressing voltage-dependent calcium channels. Acts as the functionally dominant somatostatin receptor in pancreatic alpha- and beta-cells where it mediates the inhibitory effect of somatostatin-14 on hormone secretion. Inhibits cell growth through enhancement of MAPK1 and MAPK2 phosphorylation and subsequent up-regulation of CDKN1B. Stimulates neuronal migration and axon outgrowth and may participate in neuron development and maturation during brain development. Mediates negative regulation of insulin receptor signaling through PTPN6. Inactivates SSTR3 receptor function following heterodimerization (By similarity).</text>
</comment>
<comment type="subunit">
    <text evidence="1">Homodimer and heterodimer with SSTR3 and SSTR5. Heterodimerization with SSTR3 inactivates SSTR3 receptor function. Heterodimerization with SSTR5 is enhanced by agonist stimulation of SSTR2 and increases SSTR2 cell growth inhibition activity. Following agonist stimulation, homodimers dissociate into monomers which is required for receptor internalization. Interacts with beta-arrestin; this interaction is necessary for receptor internalization and is destabilized by heterodimerization with SSTR5 which results in increased recycling of SSTR2 to the cell surface. Interacts (via C-terminus) with SHANK1 (via PDZ domain) (By similarity).</text>
</comment>
<comment type="subcellular location">
    <subcellularLocation>
        <location>Cell membrane</location>
        <topology>Multi-pass membrane protein</topology>
    </subcellularLocation>
    <subcellularLocation>
        <location evidence="1">Cytoplasm</location>
    </subcellularLocation>
    <text evidence="1">Located mainly at the cell surface under basal conditions. Agonist stimulation results in internalization to the cytoplasm (By similarity).</text>
</comment>
<comment type="PTM">
    <text evidence="1">Phosphorylated on serine and threonine residues in response to agonist stimulation, leading to receptor desensitization and rapid internalization. Phosphorylated to a greater extent on serine than threonine residues. Threonine phosphorylation is required for arrestin binding and receptor endocytosis but is not necessary for desensitization (By similarity).</text>
</comment>
<comment type="similarity">
    <text evidence="4">Belongs to the G-protein coupled receptor 1 family.</text>
</comment>
<feature type="chain" id="PRO_0000070122" description="Somatostatin receptor type 2">
    <location>
        <begin position="1"/>
        <end position="369"/>
    </location>
</feature>
<feature type="topological domain" description="Extracellular" evidence="3">
    <location>
        <begin position="1"/>
        <end position="43"/>
    </location>
</feature>
<feature type="transmembrane region" description="Helical; Name=1" evidence="3">
    <location>
        <begin position="44"/>
        <end position="67"/>
    </location>
</feature>
<feature type="topological domain" description="Cytoplasmic" evidence="3">
    <location>
        <begin position="68"/>
        <end position="78"/>
    </location>
</feature>
<feature type="transmembrane region" description="Helical; Name=2" evidence="3">
    <location>
        <begin position="79"/>
        <end position="103"/>
    </location>
</feature>
<feature type="topological domain" description="Extracellular" evidence="3">
    <location>
        <begin position="104"/>
        <end position="118"/>
    </location>
</feature>
<feature type="transmembrane region" description="Helical; Name=3" evidence="3">
    <location>
        <begin position="119"/>
        <end position="138"/>
    </location>
</feature>
<feature type="topological domain" description="Cytoplasmic" evidence="3">
    <location>
        <begin position="139"/>
        <end position="161"/>
    </location>
</feature>
<feature type="transmembrane region" description="Helical; Name=4" evidence="3">
    <location>
        <begin position="162"/>
        <end position="181"/>
    </location>
</feature>
<feature type="topological domain" description="Extracellular" evidence="3">
    <location>
        <begin position="182"/>
        <end position="207"/>
    </location>
</feature>
<feature type="transmembrane region" description="Helical; Name=5" evidence="3">
    <location>
        <begin position="208"/>
        <end position="229"/>
    </location>
</feature>
<feature type="topological domain" description="Cytoplasmic" evidence="3">
    <location>
        <begin position="230"/>
        <end position="253"/>
    </location>
</feature>
<feature type="transmembrane region" description="Helical; Name=6" evidence="3">
    <location>
        <begin position="254"/>
        <end position="278"/>
    </location>
</feature>
<feature type="topological domain" description="Extracellular" evidence="3">
    <location>
        <begin position="279"/>
        <end position="288"/>
    </location>
</feature>
<feature type="transmembrane region" description="Helical; Name=7" evidence="3">
    <location>
        <begin position="289"/>
        <end position="303"/>
    </location>
</feature>
<feature type="topological domain" description="Cytoplasmic" evidence="3">
    <location>
        <begin position="304"/>
        <end position="369"/>
    </location>
</feature>
<feature type="modified residue" description="Phosphoserine" evidence="2">
    <location>
        <position position="341"/>
    </location>
</feature>
<feature type="modified residue" description="Phosphoserine" evidence="2">
    <location>
        <position position="343"/>
    </location>
</feature>
<feature type="modified residue" description="Phosphoserine" evidence="2">
    <location>
        <position position="348"/>
    </location>
</feature>
<feature type="modified residue" description="Phosphothreonine" evidence="2">
    <location>
        <position position="353"/>
    </location>
</feature>
<feature type="modified residue" description="Phosphothreonine" evidence="2">
    <location>
        <position position="354"/>
    </location>
</feature>
<feature type="lipid moiety-binding region" description="S-palmitoyl cysteine" evidence="3">
    <location>
        <position position="328"/>
    </location>
</feature>
<feature type="glycosylation site" description="N-linked (GlcNAc...) asparagine" evidence="3">
    <location>
        <position position="9"/>
    </location>
</feature>
<feature type="glycosylation site" description="N-linked (GlcNAc...) asparagine" evidence="3">
    <location>
        <position position="22"/>
    </location>
</feature>
<feature type="glycosylation site" description="N-linked (GlcNAc...) asparagine" evidence="3">
    <location>
        <position position="29"/>
    </location>
</feature>
<feature type="glycosylation site" description="N-linked (GlcNAc...) asparagine" evidence="3">
    <location>
        <position position="32"/>
    </location>
</feature>
<feature type="disulfide bond" evidence="4">
    <location>
        <begin position="115"/>
        <end position="193"/>
    </location>
</feature>
<accession>P34994</accession>
<evidence type="ECO:0000250" key="1"/>
<evidence type="ECO:0000250" key="2">
    <source>
        <dbReference type="UniProtKB" id="P30680"/>
    </source>
</evidence>
<evidence type="ECO:0000255" key="3"/>
<evidence type="ECO:0000255" key="4">
    <source>
        <dbReference type="PROSITE-ProRule" id="PRU00521"/>
    </source>
</evidence>
<name>SSR2_PIG</name>
<organism>
    <name type="scientific">Sus scrofa</name>
    <name type="common">Pig</name>
    <dbReference type="NCBI Taxonomy" id="9823"/>
    <lineage>
        <taxon>Eukaryota</taxon>
        <taxon>Metazoa</taxon>
        <taxon>Chordata</taxon>
        <taxon>Craniata</taxon>
        <taxon>Vertebrata</taxon>
        <taxon>Euteleostomi</taxon>
        <taxon>Mammalia</taxon>
        <taxon>Eutheria</taxon>
        <taxon>Laurasiatheria</taxon>
        <taxon>Artiodactyla</taxon>
        <taxon>Suina</taxon>
        <taxon>Suidae</taxon>
        <taxon>Sus</taxon>
    </lineage>
</organism>
<sequence length="369" mass="41219">MDMAYELLNGSQPWLSSPFDLNGSVATANSSNQTEPYYDLTSNAVLTFIYFVVCIIGLCGNTLVIYVILRYAKMKTITNIYILNLAIADELFMLGLPFLAMQVALVHWPFGKAICRVVMTVDGINQFTSIFCLTVMSIDRYLAVVHPIKSAKWRRPRTAKMINVAVWGVSLLVILPIMIYAGLRSNQWGRSSCTINWPGESGAWYTGFIIYAFILGFLVPLTIICLCYLFIIIKVKSSGIRVGSSKRKKSEKKVTRMVSIVVAVFIFCWLPFYIFNVSSVSVAISPTPALKGMFDFVVVLTYANSCANPILYAFLSDNFKKSFQNVLCLVKVSGTDDGERSDSKQDKSRLNETTETQRTLLNGDLQTSI</sequence>
<keyword id="KW-1003">Cell membrane</keyword>
<keyword id="KW-0963">Cytoplasm</keyword>
<keyword id="KW-1015">Disulfide bond</keyword>
<keyword id="KW-0297">G-protein coupled receptor</keyword>
<keyword id="KW-0325">Glycoprotein</keyword>
<keyword id="KW-0449">Lipoprotein</keyword>
<keyword id="KW-0472">Membrane</keyword>
<keyword id="KW-0564">Palmitate</keyword>
<keyword id="KW-0597">Phosphoprotein</keyword>
<keyword id="KW-0675">Receptor</keyword>
<keyword id="KW-1185">Reference proteome</keyword>
<keyword id="KW-0807">Transducer</keyword>
<keyword id="KW-0812">Transmembrane</keyword>
<keyword id="KW-1133">Transmembrane helix</keyword>